<proteinExistence type="inferred from homology"/>
<evidence type="ECO:0000255" key="1">
    <source>
        <dbReference type="HAMAP-Rule" id="MF_00549"/>
    </source>
</evidence>
<keyword id="KW-0456">Lyase</keyword>
<keyword id="KW-1185">Reference proteome</keyword>
<protein>
    <recommendedName>
        <fullName evidence="1">Methylglyoxal synthase</fullName>
        <shortName evidence="1">MGS</shortName>
        <ecNumber evidence="1">4.2.3.3</ecNumber>
    </recommendedName>
</protein>
<dbReference type="EC" id="4.2.3.3" evidence="1"/>
<dbReference type="EMBL" id="AL646052">
    <property type="protein sequence ID" value="CAD15892.1"/>
    <property type="molecule type" value="Genomic_DNA"/>
</dbReference>
<dbReference type="SMR" id="Q8XXD0"/>
<dbReference type="STRING" id="267608.RSc2185"/>
<dbReference type="EnsemblBacteria" id="CAD15892">
    <property type="protein sequence ID" value="CAD15892"/>
    <property type="gene ID" value="RSc2185"/>
</dbReference>
<dbReference type="KEGG" id="rso:RSc2185"/>
<dbReference type="eggNOG" id="COG1803">
    <property type="taxonomic scope" value="Bacteria"/>
</dbReference>
<dbReference type="HOGENOM" id="CLU_120420_1_0_4"/>
<dbReference type="Proteomes" id="UP000001436">
    <property type="component" value="Chromosome"/>
</dbReference>
<dbReference type="GO" id="GO:0005829">
    <property type="term" value="C:cytosol"/>
    <property type="evidence" value="ECO:0007669"/>
    <property type="project" value="TreeGrafter"/>
</dbReference>
<dbReference type="GO" id="GO:0008929">
    <property type="term" value="F:methylglyoxal synthase activity"/>
    <property type="evidence" value="ECO:0007669"/>
    <property type="project" value="UniProtKB-UniRule"/>
</dbReference>
<dbReference type="GO" id="GO:0019242">
    <property type="term" value="P:methylglyoxal biosynthetic process"/>
    <property type="evidence" value="ECO:0007669"/>
    <property type="project" value="UniProtKB-UniRule"/>
</dbReference>
<dbReference type="CDD" id="cd01422">
    <property type="entry name" value="MGS"/>
    <property type="match status" value="1"/>
</dbReference>
<dbReference type="Gene3D" id="3.40.50.1380">
    <property type="entry name" value="Methylglyoxal synthase-like domain"/>
    <property type="match status" value="1"/>
</dbReference>
<dbReference type="HAMAP" id="MF_00549">
    <property type="entry name" value="Methylglyoxal_synth"/>
    <property type="match status" value="1"/>
</dbReference>
<dbReference type="InterPro" id="IPR004363">
    <property type="entry name" value="Methylgl_synth"/>
</dbReference>
<dbReference type="InterPro" id="IPR018148">
    <property type="entry name" value="Methylglyoxal_synth_AS"/>
</dbReference>
<dbReference type="InterPro" id="IPR011607">
    <property type="entry name" value="MGS-like_dom"/>
</dbReference>
<dbReference type="InterPro" id="IPR036914">
    <property type="entry name" value="MGS-like_dom_sf"/>
</dbReference>
<dbReference type="NCBIfam" id="TIGR00160">
    <property type="entry name" value="MGSA"/>
    <property type="match status" value="1"/>
</dbReference>
<dbReference type="NCBIfam" id="NF003559">
    <property type="entry name" value="PRK05234.1"/>
    <property type="match status" value="1"/>
</dbReference>
<dbReference type="PANTHER" id="PTHR30492">
    <property type="entry name" value="METHYLGLYOXAL SYNTHASE"/>
    <property type="match status" value="1"/>
</dbReference>
<dbReference type="PANTHER" id="PTHR30492:SF0">
    <property type="entry name" value="METHYLGLYOXAL SYNTHASE"/>
    <property type="match status" value="1"/>
</dbReference>
<dbReference type="Pfam" id="PF02142">
    <property type="entry name" value="MGS"/>
    <property type="match status" value="1"/>
</dbReference>
<dbReference type="PIRSF" id="PIRSF006614">
    <property type="entry name" value="Methylglyox_syn"/>
    <property type="match status" value="1"/>
</dbReference>
<dbReference type="SMART" id="SM00851">
    <property type="entry name" value="MGS"/>
    <property type="match status" value="1"/>
</dbReference>
<dbReference type="SUPFAM" id="SSF52335">
    <property type="entry name" value="Methylglyoxal synthase-like"/>
    <property type="match status" value="1"/>
</dbReference>
<dbReference type="PROSITE" id="PS01335">
    <property type="entry name" value="METHYLGLYOXAL_SYNTH"/>
    <property type="match status" value="1"/>
</dbReference>
<dbReference type="PROSITE" id="PS51855">
    <property type="entry name" value="MGS"/>
    <property type="match status" value="1"/>
</dbReference>
<organism>
    <name type="scientific">Ralstonia nicotianae (strain ATCC BAA-1114 / GMI1000)</name>
    <name type="common">Ralstonia solanacearum</name>
    <dbReference type="NCBI Taxonomy" id="267608"/>
    <lineage>
        <taxon>Bacteria</taxon>
        <taxon>Pseudomonadati</taxon>
        <taxon>Pseudomonadota</taxon>
        <taxon>Betaproteobacteria</taxon>
        <taxon>Burkholderiales</taxon>
        <taxon>Burkholderiaceae</taxon>
        <taxon>Ralstonia</taxon>
        <taxon>Ralstonia solanacearum species complex</taxon>
    </lineage>
</organism>
<feature type="chain" id="PRO_0000178642" description="Methylglyoxal synthase">
    <location>
        <begin position="1"/>
        <end position="135"/>
    </location>
</feature>
<feature type="domain" description="MGS-like" evidence="1">
    <location>
        <begin position="1"/>
        <end position="135"/>
    </location>
</feature>
<feature type="active site" description="Proton donor/acceptor" evidence="1">
    <location>
        <position position="64"/>
    </location>
</feature>
<feature type="binding site" evidence="1">
    <location>
        <position position="12"/>
    </location>
    <ligand>
        <name>substrate</name>
    </ligand>
</feature>
<feature type="binding site" evidence="1">
    <location>
        <position position="16"/>
    </location>
    <ligand>
        <name>substrate</name>
    </ligand>
</feature>
<feature type="binding site" evidence="1">
    <location>
        <begin position="38"/>
        <end position="41"/>
    </location>
    <ligand>
        <name>substrate</name>
    </ligand>
</feature>
<feature type="binding site" evidence="1">
    <location>
        <begin position="58"/>
        <end position="59"/>
    </location>
    <ligand>
        <name>substrate</name>
    </ligand>
</feature>
<feature type="binding site" evidence="1">
    <location>
        <position position="91"/>
    </location>
    <ligand>
        <name>substrate</name>
    </ligand>
</feature>
<sequence>MPKRRRIALIAHDHKKDDMIAFAQTHKAFLMRCDLLATGTTGGRLQDEVGLSVQRMLSGPWGGDLQIGAQLAEGRVDAVIFLRDPMTPQPHEPDINALVRACDVHNIPCATNLATADLVMIALGLAQPDPKEIHA</sequence>
<reference key="1">
    <citation type="journal article" date="2002" name="Nature">
        <title>Genome sequence of the plant pathogen Ralstonia solanacearum.</title>
        <authorList>
            <person name="Salanoubat M."/>
            <person name="Genin S."/>
            <person name="Artiguenave F."/>
            <person name="Gouzy J."/>
            <person name="Mangenot S."/>
            <person name="Arlat M."/>
            <person name="Billault A."/>
            <person name="Brottier P."/>
            <person name="Camus J.-C."/>
            <person name="Cattolico L."/>
            <person name="Chandler M."/>
            <person name="Choisne N."/>
            <person name="Claudel-Renard C."/>
            <person name="Cunnac S."/>
            <person name="Demange N."/>
            <person name="Gaspin C."/>
            <person name="Lavie M."/>
            <person name="Moisan A."/>
            <person name="Robert C."/>
            <person name="Saurin W."/>
            <person name="Schiex T."/>
            <person name="Siguier P."/>
            <person name="Thebault P."/>
            <person name="Whalen M."/>
            <person name="Wincker P."/>
            <person name="Levy M."/>
            <person name="Weissenbach J."/>
            <person name="Boucher C.A."/>
        </authorList>
    </citation>
    <scope>NUCLEOTIDE SEQUENCE [LARGE SCALE GENOMIC DNA]</scope>
    <source>
        <strain>ATCC BAA-1114 / GMI1000</strain>
    </source>
</reference>
<name>MGSA_RALN1</name>
<gene>
    <name evidence="1" type="primary">mgsA</name>
    <name type="ordered locus">RSc2185</name>
    <name type="ORF">RS01414</name>
</gene>
<comment type="function">
    <text evidence="1">Catalyzes the formation of methylglyoxal from dihydroxyacetone phosphate.</text>
</comment>
<comment type="catalytic activity">
    <reaction evidence="1">
        <text>dihydroxyacetone phosphate = methylglyoxal + phosphate</text>
        <dbReference type="Rhea" id="RHEA:17937"/>
        <dbReference type="ChEBI" id="CHEBI:17158"/>
        <dbReference type="ChEBI" id="CHEBI:43474"/>
        <dbReference type="ChEBI" id="CHEBI:57642"/>
        <dbReference type="EC" id="4.2.3.3"/>
    </reaction>
</comment>
<comment type="similarity">
    <text evidence="1">Belongs to the methylglyoxal synthase family.</text>
</comment>
<accession>Q8XXD0</accession>